<accession>A6WM55</accession>
<evidence type="ECO:0000255" key="1">
    <source>
        <dbReference type="HAMAP-Rule" id="MF_01694"/>
    </source>
</evidence>
<evidence type="ECO:0000255" key="2">
    <source>
        <dbReference type="PROSITE-ProRule" id="PRU01266"/>
    </source>
</evidence>
<organism>
    <name type="scientific">Shewanella baltica (strain OS185)</name>
    <dbReference type="NCBI Taxonomy" id="402882"/>
    <lineage>
        <taxon>Bacteria</taxon>
        <taxon>Pseudomonadati</taxon>
        <taxon>Pseudomonadota</taxon>
        <taxon>Gammaproteobacteria</taxon>
        <taxon>Alteromonadales</taxon>
        <taxon>Shewanellaceae</taxon>
        <taxon>Shewanella</taxon>
    </lineage>
</organism>
<proteinExistence type="inferred from homology"/>
<comment type="function">
    <text evidence="1">Catalyzes the conversion of dethiobiotin (DTB) to biotin by the insertion of a sulfur atom into dethiobiotin via a radical-based mechanism.</text>
</comment>
<comment type="catalytic activity">
    <reaction evidence="1">
        <text>(4R,5S)-dethiobiotin + (sulfur carrier)-SH + 2 reduced [2Fe-2S]-[ferredoxin] + 2 S-adenosyl-L-methionine = (sulfur carrier)-H + biotin + 2 5'-deoxyadenosine + 2 L-methionine + 2 oxidized [2Fe-2S]-[ferredoxin]</text>
        <dbReference type="Rhea" id="RHEA:22060"/>
        <dbReference type="Rhea" id="RHEA-COMP:10000"/>
        <dbReference type="Rhea" id="RHEA-COMP:10001"/>
        <dbReference type="Rhea" id="RHEA-COMP:14737"/>
        <dbReference type="Rhea" id="RHEA-COMP:14739"/>
        <dbReference type="ChEBI" id="CHEBI:17319"/>
        <dbReference type="ChEBI" id="CHEBI:29917"/>
        <dbReference type="ChEBI" id="CHEBI:33737"/>
        <dbReference type="ChEBI" id="CHEBI:33738"/>
        <dbReference type="ChEBI" id="CHEBI:57586"/>
        <dbReference type="ChEBI" id="CHEBI:57844"/>
        <dbReference type="ChEBI" id="CHEBI:59789"/>
        <dbReference type="ChEBI" id="CHEBI:64428"/>
        <dbReference type="ChEBI" id="CHEBI:149473"/>
        <dbReference type="EC" id="2.8.1.6"/>
    </reaction>
</comment>
<comment type="cofactor">
    <cofactor evidence="1">
        <name>[4Fe-4S] cluster</name>
        <dbReference type="ChEBI" id="CHEBI:49883"/>
    </cofactor>
    <text evidence="1">Binds 1 [4Fe-4S] cluster. The cluster is coordinated with 3 cysteines and an exchangeable S-adenosyl-L-methionine.</text>
</comment>
<comment type="cofactor">
    <cofactor evidence="1">
        <name>[2Fe-2S] cluster</name>
        <dbReference type="ChEBI" id="CHEBI:190135"/>
    </cofactor>
    <text evidence="1">Binds 1 [2Fe-2S] cluster. The cluster is coordinated with 3 cysteines and 1 arginine.</text>
</comment>
<comment type="pathway">
    <text evidence="1">Cofactor biosynthesis; biotin biosynthesis; biotin from 7,8-diaminononanoate: step 2/2.</text>
</comment>
<comment type="subunit">
    <text evidence="1">Homodimer.</text>
</comment>
<comment type="similarity">
    <text evidence="1">Belongs to the radical SAM superfamily. Biotin synthase family.</text>
</comment>
<sequence>MSQLQVRHDWKREEIEALFALPMNDLLFKAHSIHREVYDPNEVQISRLLSIKTGACPEDCKYCPQSARYDTGLEKERLLAMETVLTEARSAKAAGASRFCMGAAWRNPKEKDMPYLKQMVQEVKALGMETCMTLGMLSEDQANDLASAGLDYYNHNLDTSPEYYGDVITTRTYQNRLDTLTNVRASGMKVCSGGIVGMGEKATDRAGLLQQLANLPQHPDSVPINMLVKVAGTPFEKLDDLDPLEFVRTIAVARILMPLSRVRLSAGRENMSDELQAMCFFAGANSIFYGCKLLTTPNPEESDDMGLFRRLGLRPEQGAAAKLEEESAVLAKAAAYQDKSSAQFYDAGAL</sequence>
<protein>
    <recommendedName>
        <fullName evidence="1">Biotin synthase</fullName>
        <ecNumber evidence="1">2.8.1.6</ecNumber>
    </recommendedName>
</protein>
<gene>
    <name evidence="1" type="primary">bioB</name>
    <name type="ordered locus">Shew185_1751</name>
</gene>
<dbReference type="EC" id="2.8.1.6" evidence="1"/>
<dbReference type="EMBL" id="CP000753">
    <property type="protein sequence ID" value="ABS07894.1"/>
    <property type="molecule type" value="Genomic_DNA"/>
</dbReference>
<dbReference type="RefSeq" id="WP_006081265.1">
    <property type="nucleotide sequence ID" value="NC_009665.1"/>
</dbReference>
<dbReference type="SMR" id="A6WM55"/>
<dbReference type="GeneID" id="11772018"/>
<dbReference type="KEGG" id="sbm:Shew185_1751"/>
<dbReference type="HOGENOM" id="CLU_033172_1_2_6"/>
<dbReference type="UniPathway" id="UPA00078">
    <property type="reaction ID" value="UER00162"/>
</dbReference>
<dbReference type="GO" id="GO:0051537">
    <property type="term" value="F:2 iron, 2 sulfur cluster binding"/>
    <property type="evidence" value="ECO:0007669"/>
    <property type="project" value="UniProtKB-KW"/>
</dbReference>
<dbReference type="GO" id="GO:0051539">
    <property type="term" value="F:4 iron, 4 sulfur cluster binding"/>
    <property type="evidence" value="ECO:0007669"/>
    <property type="project" value="UniProtKB-KW"/>
</dbReference>
<dbReference type="GO" id="GO:0004076">
    <property type="term" value="F:biotin synthase activity"/>
    <property type="evidence" value="ECO:0007669"/>
    <property type="project" value="UniProtKB-UniRule"/>
</dbReference>
<dbReference type="GO" id="GO:0005506">
    <property type="term" value="F:iron ion binding"/>
    <property type="evidence" value="ECO:0007669"/>
    <property type="project" value="UniProtKB-UniRule"/>
</dbReference>
<dbReference type="GO" id="GO:0009102">
    <property type="term" value="P:biotin biosynthetic process"/>
    <property type="evidence" value="ECO:0007669"/>
    <property type="project" value="UniProtKB-UniRule"/>
</dbReference>
<dbReference type="CDD" id="cd01335">
    <property type="entry name" value="Radical_SAM"/>
    <property type="match status" value="1"/>
</dbReference>
<dbReference type="FunFam" id="3.20.20.70:FF:000011">
    <property type="entry name" value="Biotin synthase"/>
    <property type="match status" value="1"/>
</dbReference>
<dbReference type="Gene3D" id="3.20.20.70">
    <property type="entry name" value="Aldolase class I"/>
    <property type="match status" value="1"/>
</dbReference>
<dbReference type="HAMAP" id="MF_01694">
    <property type="entry name" value="BioB"/>
    <property type="match status" value="1"/>
</dbReference>
<dbReference type="InterPro" id="IPR013785">
    <property type="entry name" value="Aldolase_TIM"/>
</dbReference>
<dbReference type="InterPro" id="IPR010722">
    <property type="entry name" value="BATS_dom"/>
</dbReference>
<dbReference type="InterPro" id="IPR002684">
    <property type="entry name" value="Biotin_synth/BioAB"/>
</dbReference>
<dbReference type="InterPro" id="IPR024177">
    <property type="entry name" value="Biotin_synthase"/>
</dbReference>
<dbReference type="InterPro" id="IPR006638">
    <property type="entry name" value="Elp3/MiaA/NifB-like_rSAM"/>
</dbReference>
<dbReference type="InterPro" id="IPR007197">
    <property type="entry name" value="rSAM"/>
</dbReference>
<dbReference type="NCBIfam" id="TIGR00433">
    <property type="entry name" value="bioB"/>
    <property type="match status" value="1"/>
</dbReference>
<dbReference type="PANTHER" id="PTHR22976">
    <property type="entry name" value="BIOTIN SYNTHASE"/>
    <property type="match status" value="1"/>
</dbReference>
<dbReference type="PANTHER" id="PTHR22976:SF2">
    <property type="entry name" value="BIOTIN SYNTHASE, MITOCHONDRIAL"/>
    <property type="match status" value="1"/>
</dbReference>
<dbReference type="Pfam" id="PF06968">
    <property type="entry name" value="BATS"/>
    <property type="match status" value="1"/>
</dbReference>
<dbReference type="Pfam" id="PF04055">
    <property type="entry name" value="Radical_SAM"/>
    <property type="match status" value="1"/>
</dbReference>
<dbReference type="PIRSF" id="PIRSF001619">
    <property type="entry name" value="Biotin_synth"/>
    <property type="match status" value="1"/>
</dbReference>
<dbReference type="SFLD" id="SFLDF00272">
    <property type="entry name" value="biotin_synthase"/>
    <property type="match status" value="1"/>
</dbReference>
<dbReference type="SFLD" id="SFLDS00029">
    <property type="entry name" value="Radical_SAM"/>
    <property type="match status" value="1"/>
</dbReference>
<dbReference type="SMART" id="SM00876">
    <property type="entry name" value="BATS"/>
    <property type="match status" value="1"/>
</dbReference>
<dbReference type="SMART" id="SM00729">
    <property type="entry name" value="Elp3"/>
    <property type="match status" value="1"/>
</dbReference>
<dbReference type="SUPFAM" id="SSF102114">
    <property type="entry name" value="Radical SAM enzymes"/>
    <property type="match status" value="1"/>
</dbReference>
<dbReference type="PROSITE" id="PS51918">
    <property type="entry name" value="RADICAL_SAM"/>
    <property type="match status" value="1"/>
</dbReference>
<keyword id="KW-0001">2Fe-2S</keyword>
<keyword id="KW-0004">4Fe-4S</keyword>
<keyword id="KW-0093">Biotin biosynthesis</keyword>
<keyword id="KW-0408">Iron</keyword>
<keyword id="KW-0411">Iron-sulfur</keyword>
<keyword id="KW-0479">Metal-binding</keyword>
<keyword id="KW-0949">S-adenosyl-L-methionine</keyword>
<keyword id="KW-0808">Transferase</keyword>
<reference key="1">
    <citation type="submission" date="2007-07" db="EMBL/GenBank/DDBJ databases">
        <title>Complete sequence of chromosome of Shewanella baltica OS185.</title>
        <authorList>
            <consortium name="US DOE Joint Genome Institute"/>
            <person name="Copeland A."/>
            <person name="Lucas S."/>
            <person name="Lapidus A."/>
            <person name="Barry K."/>
            <person name="Glavina del Rio T."/>
            <person name="Dalin E."/>
            <person name="Tice H."/>
            <person name="Pitluck S."/>
            <person name="Sims D."/>
            <person name="Brettin T."/>
            <person name="Bruce D."/>
            <person name="Detter J.C."/>
            <person name="Han C."/>
            <person name="Schmutz J."/>
            <person name="Larimer F."/>
            <person name="Land M."/>
            <person name="Hauser L."/>
            <person name="Kyrpides N."/>
            <person name="Mikhailova N."/>
            <person name="Brettar I."/>
            <person name="Rodrigues J."/>
            <person name="Konstantinidis K."/>
            <person name="Tiedje J."/>
            <person name="Richardson P."/>
        </authorList>
    </citation>
    <scope>NUCLEOTIDE SEQUENCE [LARGE SCALE GENOMIC DNA]</scope>
    <source>
        <strain>OS185</strain>
    </source>
</reference>
<feature type="chain" id="PRO_0000381615" description="Biotin synthase">
    <location>
        <begin position="1"/>
        <end position="350"/>
    </location>
</feature>
<feature type="domain" description="Radical SAM core" evidence="2">
    <location>
        <begin position="41"/>
        <end position="268"/>
    </location>
</feature>
<feature type="binding site" evidence="1">
    <location>
        <position position="56"/>
    </location>
    <ligand>
        <name>[4Fe-4S] cluster</name>
        <dbReference type="ChEBI" id="CHEBI:49883"/>
        <note>4Fe-4S-S-AdoMet</note>
    </ligand>
</feature>
<feature type="binding site" evidence="1">
    <location>
        <position position="60"/>
    </location>
    <ligand>
        <name>[4Fe-4S] cluster</name>
        <dbReference type="ChEBI" id="CHEBI:49883"/>
        <note>4Fe-4S-S-AdoMet</note>
    </ligand>
</feature>
<feature type="binding site" evidence="1">
    <location>
        <position position="63"/>
    </location>
    <ligand>
        <name>[4Fe-4S] cluster</name>
        <dbReference type="ChEBI" id="CHEBI:49883"/>
        <note>4Fe-4S-S-AdoMet</note>
    </ligand>
</feature>
<feature type="binding site" evidence="1">
    <location>
        <position position="100"/>
    </location>
    <ligand>
        <name>[2Fe-2S] cluster</name>
        <dbReference type="ChEBI" id="CHEBI:190135"/>
    </ligand>
</feature>
<feature type="binding site" evidence="1">
    <location>
        <position position="131"/>
    </location>
    <ligand>
        <name>[2Fe-2S] cluster</name>
        <dbReference type="ChEBI" id="CHEBI:190135"/>
    </ligand>
</feature>
<feature type="binding site" evidence="1">
    <location>
        <position position="191"/>
    </location>
    <ligand>
        <name>[2Fe-2S] cluster</name>
        <dbReference type="ChEBI" id="CHEBI:190135"/>
    </ligand>
</feature>
<feature type="binding site" evidence="1">
    <location>
        <position position="263"/>
    </location>
    <ligand>
        <name>[2Fe-2S] cluster</name>
        <dbReference type="ChEBI" id="CHEBI:190135"/>
    </ligand>
</feature>
<name>BIOB_SHEB8</name>